<comment type="function">
    <text evidence="1">Binds to DNA and alters its conformation. May be involved in regulation of gene expression, nucleoid organization and DNA protection.</text>
</comment>
<comment type="subunit">
    <text evidence="1">Homodimer.</text>
</comment>
<comment type="subcellular location">
    <subcellularLocation>
        <location evidence="1">Cytoplasm</location>
        <location evidence="1">Nucleoid</location>
    </subcellularLocation>
</comment>
<comment type="similarity">
    <text evidence="1">Belongs to the YbaB/EbfC family.</text>
</comment>
<accession>A6LKF8</accession>
<proteinExistence type="inferred from homology"/>
<protein>
    <recommendedName>
        <fullName evidence="1">Nucleoid-associated protein Tmel_0542</fullName>
    </recommendedName>
</protein>
<reference key="1">
    <citation type="submission" date="2007-05" db="EMBL/GenBank/DDBJ databases">
        <title>Complete sequence of Thermosipho melanesiensis BI429.</title>
        <authorList>
            <consortium name="US DOE Joint Genome Institute"/>
            <person name="Copeland A."/>
            <person name="Lucas S."/>
            <person name="Lapidus A."/>
            <person name="Barry K."/>
            <person name="Glavina del Rio T."/>
            <person name="Dalin E."/>
            <person name="Tice H."/>
            <person name="Pitluck S."/>
            <person name="Chertkov O."/>
            <person name="Brettin T."/>
            <person name="Bruce D."/>
            <person name="Detter J.C."/>
            <person name="Han C."/>
            <person name="Schmutz J."/>
            <person name="Larimer F."/>
            <person name="Land M."/>
            <person name="Hauser L."/>
            <person name="Kyrpides N."/>
            <person name="Mikhailova N."/>
            <person name="Nelson K."/>
            <person name="Gogarten J.P."/>
            <person name="Noll K."/>
            <person name="Richardson P."/>
        </authorList>
    </citation>
    <scope>NUCLEOTIDE SEQUENCE [LARGE SCALE GENOMIC DNA]</scope>
    <source>
        <strain>DSM 12029 / CIP 104789 / BI429</strain>
    </source>
</reference>
<feature type="chain" id="PRO_1000003860" description="Nucleoid-associated protein Tmel_0542">
    <location>
        <begin position="1"/>
        <end position="111"/>
    </location>
</feature>
<name>Y542_THEM4</name>
<organism>
    <name type="scientific">Thermosipho melanesiensis (strain DSM 12029 / CIP 104789 / BI429)</name>
    <dbReference type="NCBI Taxonomy" id="391009"/>
    <lineage>
        <taxon>Bacteria</taxon>
        <taxon>Thermotogati</taxon>
        <taxon>Thermotogota</taxon>
        <taxon>Thermotogae</taxon>
        <taxon>Thermotogales</taxon>
        <taxon>Fervidobacteriaceae</taxon>
        <taxon>Thermosipho</taxon>
    </lineage>
</organism>
<gene>
    <name type="ordered locus">Tmel_0542</name>
</gene>
<dbReference type="EMBL" id="CP000716">
    <property type="protein sequence ID" value="ABR30409.1"/>
    <property type="molecule type" value="Genomic_DNA"/>
</dbReference>
<dbReference type="RefSeq" id="WP_012056770.1">
    <property type="nucleotide sequence ID" value="NC_009616.1"/>
</dbReference>
<dbReference type="SMR" id="A6LKF8"/>
<dbReference type="STRING" id="391009.Tmel_0542"/>
<dbReference type="KEGG" id="tme:Tmel_0542"/>
<dbReference type="eggNOG" id="COG0718">
    <property type="taxonomic scope" value="Bacteria"/>
</dbReference>
<dbReference type="HOGENOM" id="CLU_140930_1_0_0"/>
<dbReference type="Proteomes" id="UP000001110">
    <property type="component" value="Chromosome"/>
</dbReference>
<dbReference type="GO" id="GO:0043590">
    <property type="term" value="C:bacterial nucleoid"/>
    <property type="evidence" value="ECO:0007669"/>
    <property type="project" value="UniProtKB-UniRule"/>
</dbReference>
<dbReference type="GO" id="GO:0005829">
    <property type="term" value="C:cytosol"/>
    <property type="evidence" value="ECO:0007669"/>
    <property type="project" value="TreeGrafter"/>
</dbReference>
<dbReference type="GO" id="GO:0003677">
    <property type="term" value="F:DNA binding"/>
    <property type="evidence" value="ECO:0007669"/>
    <property type="project" value="UniProtKB-UniRule"/>
</dbReference>
<dbReference type="Gene3D" id="3.30.1310.10">
    <property type="entry name" value="Nucleoid-associated protein YbaB-like domain"/>
    <property type="match status" value="1"/>
</dbReference>
<dbReference type="HAMAP" id="MF_00274">
    <property type="entry name" value="DNA_YbaB_EbfC"/>
    <property type="match status" value="1"/>
</dbReference>
<dbReference type="InterPro" id="IPR036894">
    <property type="entry name" value="YbaB-like_sf"/>
</dbReference>
<dbReference type="InterPro" id="IPR004401">
    <property type="entry name" value="YbaB/EbfC"/>
</dbReference>
<dbReference type="PANTHER" id="PTHR33449">
    <property type="entry name" value="NUCLEOID-ASSOCIATED PROTEIN YBAB"/>
    <property type="match status" value="1"/>
</dbReference>
<dbReference type="PANTHER" id="PTHR33449:SF1">
    <property type="entry name" value="NUCLEOID-ASSOCIATED PROTEIN YBAB"/>
    <property type="match status" value="1"/>
</dbReference>
<dbReference type="Pfam" id="PF02575">
    <property type="entry name" value="YbaB_DNA_bd"/>
    <property type="match status" value="1"/>
</dbReference>
<dbReference type="PIRSF" id="PIRSF004555">
    <property type="entry name" value="UCP004555"/>
    <property type="match status" value="1"/>
</dbReference>
<dbReference type="SUPFAM" id="SSF82607">
    <property type="entry name" value="YbaB-like"/>
    <property type="match status" value="1"/>
</dbReference>
<sequence length="111" mass="12531">MKKLKSFGGKNLGGKSMNQLQKLQEEMQKKLQEVEEGFSNVEVDVSVGGGAIKIFATADRKVKDIEIDEDLLEDTETLNDLLIAGINELMEKIEKIREEEMAKITQNFLPF</sequence>
<keyword id="KW-0963">Cytoplasm</keyword>
<keyword id="KW-0238">DNA-binding</keyword>
<evidence type="ECO:0000255" key="1">
    <source>
        <dbReference type="HAMAP-Rule" id="MF_00274"/>
    </source>
</evidence>